<gene>
    <name type="ORF">UMAG_10688</name>
</gene>
<name>GATB_MYCMD</name>
<feature type="transit peptide" description="Mitochondrion" evidence="1">
    <location>
        <begin position="1"/>
        <end position="16"/>
    </location>
</feature>
<feature type="chain" id="PRO_0000413282" description="Glutamyl-tRNA(Gln) amidotransferase subunit B, mitochondrial">
    <location>
        <begin position="17"/>
        <end position="647"/>
    </location>
</feature>
<feature type="region of interest" description="Disordered" evidence="2">
    <location>
        <begin position="39"/>
        <end position="77"/>
    </location>
</feature>
<feature type="compositionally biased region" description="Low complexity" evidence="2">
    <location>
        <begin position="58"/>
        <end position="76"/>
    </location>
</feature>
<accession>Q4P525</accession>
<accession>A0A0D1DQN4</accession>
<comment type="function">
    <text evidence="1">Allows the formation of correctly charged Gln-tRNA(Gln) through the transamidation of misacylated Glu-tRNA(Gln) in the mitochondria. The reaction takes place in the presence of glutamine and ATP through an activated gamma-phospho-Glu-tRNA(Gln).</text>
</comment>
<comment type="catalytic activity">
    <reaction evidence="1">
        <text>L-glutamyl-tRNA(Gln) + L-glutamine + ATP + H2O = L-glutaminyl-tRNA(Gln) + L-glutamate + ADP + phosphate + H(+)</text>
        <dbReference type="Rhea" id="RHEA:17521"/>
        <dbReference type="Rhea" id="RHEA-COMP:9681"/>
        <dbReference type="Rhea" id="RHEA-COMP:9684"/>
        <dbReference type="ChEBI" id="CHEBI:15377"/>
        <dbReference type="ChEBI" id="CHEBI:15378"/>
        <dbReference type="ChEBI" id="CHEBI:29985"/>
        <dbReference type="ChEBI" id="CHEBI:30616"/>
        <dbReference type="ChEBI" id="CHEBI:43474"/>
        <dbReference type="ChEBI" id="CHEBI:58359"/>
        <dbReference type="ChEBI" id="CHEBI:78520"/>
        <dbReference type="ChEBI" id="CHEBI:78521"/>
        <dbReference type="ChEBI" id="CHEBI:456216"/>
    </reaction>
</comment>
<comment type="subunit">
    <text evidence="1">Subunit of the heterotrimeric GatCAB amidotransferase (AdT) complex, composed of A, B and C subunits.</text>
</comment>
<comment type="subcellular location">
    <subcellularLocation>
        <location evidence="1">Mitochondrion</location>
    </subcellularLocation>
</comment>
<comment type="similarity">
    <text evidence="1">Belongs to the GatB/GatE family. GatB subfamily.</text>
</comment>
<evidence type="ECO:0000255" key="1">
    <source>
        <dbReference type="HAMAP-Rule" id="MF_03147"/>
    </source>
</evidence>
<evidence type="ECO:0000256" key="2">
    <source>
        <dbReference type="SAM" id="MobiDB-lite"/>
    </source>
</evidence>
<keyword id="KW-0067">ATP-binding</keyword>
<keyword id="KW-0436">Ligase</keyword>
<keyword id="KW-0496">Mitochondrion</keyword>
<keyword id="KW-0547">Nucleotide-binding</keyword>
<keyword id="KW-0648">Protein biosynthesis</keyword>
<keyword id="KW-1185">Reference proteome</keyword>
<keyword id="KW-0809">Transit peptide</keyword>
<dbReference type="EC" id="6.3.5.-" evidence="1"/>
<dbReference type="EMBL" id="CM003156">
    <property type="protein sequence ID" value="KIS66724.1"/>
    <property type="molecule type" value="Genomic_DNA"/>
</dbReference>
<dbReference type="RefSeq" id="XP_011391740.1">
    <property type="nucleotide sequence ID" value="XM_011393438.1"/>
</dbReference>
<dbReference type="SMR" id="Q4P525"/>
<dbReference type="FunCoup" id="Q4P525">
    <property type="interactions" value="269"/>
</dbReference>
<dbReference type="STRING" id="237631.Q4P525"/>
<dbReference type="EnsemblFungi" id="KIS66724">
    <property type="protein sequence ID" value="KIS66724"/>
    <property type="gene ID" value="UMAG_10688"/>
</dbReference>
<dbReference type="GeneID" id="23566683"/>
<dbReference type="KEGG" id="uma:UMAG_10688"/>
<dbReference type="VEuPathDB" id="FungiDB:UMAG_10688"/>
<dbReference type="eggNOG" id="KOG2438">
    <property type="taxonomic scope" value="Eukaryota"/>
</dbReference>
<dbReference type="HOGENOM" id="CLU_019240_4_0_1"/>
<dbReference type="InParanoid" id="Q4P525"/>
<dbReference type="OrthoDB" id="1722066at2759"/>
<dbReference type="Proteomes" id="UP000000561">
    <property type="component" value="Chromosome 17"/>
</dbReference>
<dbReference type="GO" id="GO:0030956">
    <property type="term" value="C:glutamyl-tRNA(Gln) amidotransferase complex"/>
    <property type="evidence" value="ECO:0000318"/>
    <property type="project" value="GO_Central"/>
</dbReference>
<dbReference type="GO" id="GO:0005739">
    <property type="term" value="C:mitochondrion"/>
    <property type="evidence" value="ECO:0000318"/>
    <property type="project" value="GO_Central"/>
</dbReference>
<dbReference type="GO" id="GO:0005524">
    <property type="term" value="F:ATP binding"/>
    <property type="evidence" value="ECO:0007669"/>
    <property type="project" value="UniProtKB-KW"/>
</dbReference>
<dbReference type="GO" id="GO:0050567">
    <property type="term" value="F:glutaminyl-tRNA synthase (glutamine-hydrolyzing) activity"/>
    <property type="evidence" value="ECO:0000318"/>
    <property type="project" value="GO_Central"/>
</dbReference>
<dbReference type="GO" id="GO:0070681">
    <property type="term" value="P:glutaminyl-tRNAGln biosynthesis via transamidation"/>
    <property type="evidence" value="ECO:0000318"/>
    <property type="project" value="GO_Central"/>
</dbReference>
<dbReference type="GO" id="GO:0032543">
    <property type="term" value="P:mitochondrial translation"/>
    <property type="evidence" value="ECO:0000318"/>
    <property type="project" value="GO_Central"/>
</dbReference>
<dbReference type="Gene3D" id="1.10.10.410">
    <property type="match status" value="1"/>
</dbReference>
<dbReference type="HAMAP" id="MF_00121">
    <property type="entry name" value="GatB"/>
    <property type="match status" value="1"/>
</dbReference>
<dbReference type="InterPro" id="IPR017959">
    <property type="entry name" value="Asn/Gln-tRNA_amidoTrfase_suB/E"/>
</dbReference>
<dbReference type="InterPro" id="IPR006075">
    <property type="entry name" value="Asn/Gln-tRNA_Trfase_suB/E_cat"/>
</dbReference>
<dbReference type="InterPro" id="IPR018027">
    <property type="entry name" value="Asn/Gln_amidotransferase"/>
</dbReference>
<dbReference type="InterPro" id="IPR003789">
    <property type="entry name" value="Asn/Gln_tRNA_amidoTrase-B-like"/>
</dbReference>
<dbReference type="InterPro" id="IPR004413">
    <property type="entry name" value="GatB"/>
</dbReference>
<dbReference type="InterPro" id="IPR023168">
    <property type="entry name" value="GatB_Yqey_C_2"/>
</dbReference>
<dbReference type="InterPro" id="IPR017958">
    <property type="entry name" value="Gln-tRNA_amidoTrfase_suB_CS"/>
</dbReference>
<dbReference type="InterPro" id="IPR014746">
    <property type="entry name" value="Gln_synth/guanido_kin_cat_dom"/>
</dbReference>
<dbReference type="PANTHER" id="PTHR11659">
    <property type="entry name" value="GLUTAMYL-TRNA GLN AMIDOTRANSFERASE SUBUNIT B MITOCHONDRIAL AND PROKARYOTIC PET112-RELATED"/>
    <property type="match status" value="1"/>
</dbReference>
<dbReference type="PANTHER" id="PTHR11659:SF0">
    <property type="entry name" value="GLUTAMYL-TRNA(GLN) AMIDOTRANSFERASE SUBUNIT B, MITOCHONDRIAL"/>
    <property type="match status" value="1"/>
</dbReference>
<dbReference type="Pfam" id="PF02934">
    <property type="entry name" value="GatB_N"/>
    <property type="match status" value="1"/>
</dbReference>
<dbReference type="Pfam" id="PF02637">
    <property type="entry name" value="GatB_Yqey"/>
    <property type="match status" value="1"/>
</dbReference>
<dbReference type="SMART" id="SM00845">
    <property type="entry name" value="GatB_Yqey"/>
    <property type="match status" value="1"/>
</dbReference>
<dbReference type="SUPFAM" id="SSF89095">
    <property type="entry name" value="GatB/YqeY motif"/>
    <property type="match status" value="1"/>
</dbReference>
<dbReference type="SUPFAM" id="SSF55931">
    <property type="entry name" value="Glutamine synthetase/guanido kinase"/>
    <property type="match status" value="1"/>
</dbReference>
<dbReference type="PROSITE" id="PS01234">
    <property type="entry name" value="GATB"/>
    <property type="match status" value="1"/>
</dbReference>
<sequence>MARNLCRNVQTTPRPLTALSLRRMVTPFHDLELQGSHCPRPRYFGSSTAKSAKKKSNNKAYSGSSMSAGDASAGPSRYPPLPEGWQAVIGIECHVQIKDKHKLFSTAELPTPSTPPNTLVTAFDAAHPGTLPTLNRSALRLAARTALSLNCQIHAESRFDRKHYFYSDLPAGYQITQKYMPLANNGQIKLLFDEGHLPSPEDEITVEIEQLQLEQDTAKSSYFDIGTTFRLDQASLADASNAEASPGAILHETDDDRVDRSFVDLNRAGAALMEIVSGPQMRTPEQAGAYVRKLQQLVRRIGASDGNMQEGSLRCDVNVSVNRIGEPFGTRCEVKNLNSVRFMMNAISFESHRQVKLLQQNGRVEQETRGYNESDGTTFRLRGKEDAPDYRYMPDPNLPPILLSEQQLHELRHGLPELPDARRARLVEQYGLSSRDINVLMRVGSEDERDGRIATQSLDTHAQQQTSSDAVDYFEQVATGRSAQTALNWIIHELMKGLNARNLPFKEWYLPAEYLGQLIDLVEDGQVTGTTAKTVIADLLSSAQSGHDGKTCLSLAAVRALAQSSSSPVFDLLKQRGLLALNTKKDLMPLVESAMERLPDEVAQVRKGNLKVAMRIVGQVMKDANGRANAKLVHQTILEQLGPTSAP</sequence>
<reference key="1">
    <citation type="journal article" date="2006" name="Nature">
        <title>Insights from the genome of the biotrophic fungal plant pathogen Ustilago maydis.</title>
        <authorList>
            <person name="Kaemper J."/>
            <person name="Kahmann R."/>
            <person name="Boelker M."/>
            <person name="Ma L.-J."/>
            <person name="Brefort T."/>
            <person name="Saville B.J."/>
            <person name="Banuett F."/>
            <person name="Kronstad J.W."/>
            <person name="Gold S.E."/>
            <person name="Mueller O."/>
            <person name="Perlin M.H."/>
            <person name="Woesten H.A.B."/>
            <person name="de Vries R."/>
            <person name="Ruiz-Herrera J."/>
            <person name="Reynaga-Pena C.G."/>
            <person name="Snetselaar K."/>
            <person name="McCann M."/>
            <person name="Perez-Martin J."/>
            <person name="Feldbruegge M."/>
            <person name="Basse C.W."/>
            <person name="Steinberg G."/>
            <person name="Ibeas J.I."/>
            <person name="Holloman W."/>
            <person name="Guzman P."/>
            <person name="Farman M.L."/>
            <person name="Stajich J.E."/>
            <person name="Sentandreu R."/>
            <person name="Gonzalez-Prieto J.M."/>
            <person name="Kennell J.C."/>
            <person name="Molina L."/>
            <person name="Schirawski J."/>
            <person name="Mendoza-Mendoza A."/>
            <person name="Greilinger D."/>
            <person name="Muench K."/>
            <person name="Roessel N."/>
            <person name="Scherer M."/>
            <person name="Vranes M."/>
            <person name="Ladendorf O."/>
            <person name="Vincon V."/>
            <person name="Fuchs U."/>
            <person name="Sandrock B."/>
            <person name="Meng S."/>
            <person name="Ho E.C.H."/>
            <person name="Cahill M.J."/>
            <person name="Boyce K.J."/>
            <person name="Klose J."/>
            <person name="Klosterman S.J."/>
            <person name="Deelstra H.J."/>
            <person name="Ortiz-Castellanos L."/>
            <person name="Li W."/>
            <person name="Sanchez-Alonso P."/>
            <person name="Schreier P.H."/>
            <person name="Haeuser-Hahn I."/>
            <person name="Vaupel M."/>
            <person name="Koopmann E."/>
            <person name="Friedrich G."/>
            <person name="Voss H."/>
            <person name="Schlueter T."/>
            <person name="Margolis J."/>
            <person name="Platt D."/>
            <person name="Swimmer C."/>
            <person name="Gnirke A."/>
            <person name="Chen F."/>
            <person name="Vysotskaia V."/>
            <person name="Mannhaupt G."/>
            <person name="Gueldener U."/>
            <person name="Muensterkoetter M."/>
            <person name="Haase D."/>
            <person name="Oesterheld M."/>
            <person name="Mewes H.-W."/>
            <person name="Mauceli E.W."/>
            <person name="DeCaprio D."/>
            <person name="Wade C.M."/>
            <person name="Butler J."/>
            <person name="Young S.K."/>
            <person name="Jaffe D.B."/>
            <person name="Calvo S.E."/>
            <person name="Nusbaum C."/>
            <person name="Galagan J.E."/>
            <person name="Birren B.W."/>
        </authorList>
    </citation>
    <scope>NUCLEOTIDE SEQUENCE [LARGE SCALE GENOMIC DNA]</scope>
    <source>
        <strain>DSM 14603 / FGSC 9021 / UM521</strain>
    </source>
</reference>
<reference key="2">
    <citation type="submission" date="2014-09" db="EMBL/GenBank/DDBJ databases">
        <authorList>
            <person name="Gueldener U."/>
            <person name="Muensterkoetter M."/>
            <person name="Walter M.C."/>
            <person name="Mannhaupt G."/>
            <person name="Kahmann R."/>
        </authorList>
    </citation>
    <scope>GENOME REANNOTATION</scope>
    <source>
        <strain>DSM 14603 / FGSC 9021 / UM521</strain>
    </source>
</reference>
<protein>
    <recommendedName>
        <fullName evidence="1">Glutamyl-tRNA(Gln) amidotransferase subunit B, mitochondrial</fullName>
        <shortName evidence="1">Glu-AdT subunit B</shortName>
        <ecNumber evidence="1">6.3.5.-</ecNumber>
    </recommendedName>
</protein>
<organism>
    <name type="scientific">Mycosarcoma maydis</name>
    <name type="common">Corn smut fungus</name>
    <name type="synonym">Ustilago maydis</name>
    <dbReference type="NCBI Taxonomy" id="5270"/>
    <lineage>
        <taxon>Eukaryota</taxon>
        <taxon>Fungi</taxon>
        <taxon>Dikarya</taxon>
        <taxon>Basidiomycota</taxon>
        <taxon>Ustilaginomycotina</taxon>
        <taxon>Ustilaginomycetes</taxon>
        <taxon>Ustilaginales</taxon>
        <taxon>Ustilaginaceae</taxon>
        <taxon>Mycosarcoma</taxon>
    </lineage>
</organism>
<proteinExistence type="inferred from homology"/>